<accession>P0C0B2</accession>
<sequence>MKKDYKKVFLKNTKEERIKENSNYLRGTIIDDLKDEITNGFTGDNFSLIRFHGMYQDDRDLRLERNEQKLEPRYAMMLRCRLPRGIIKAKKWLKIDHFASKNTLYGTIRLNNLQTFQFHGILKKTLKDAHKMLNKIGLDSLGTANDVNRNVLCTSNPMESLIHQQCYEWVSKISNFLLPQTKAYAEIWLNQKKIATTDQEPILGKTYLPRKFKTTVVVPPYNDVDLYANDMNFIAITKNNKIVGFNVLIGGGLSINHGNKNTWPFLAVELGYITLEKTLSVAESIVTTQRDWGNRTDRKNAKTRYTIAKVGLSVFKKEVEKRANMTFETIKPYYFISRGDRFGWTKNINNDWSLTVFIQNGRIYDNDKQLVKSGLLKIANLHTGNFRLTANQNIVISEILDKNKKKIEEIAISHGLIKKVSSLRENSMACVSFPTCPLAIAESERILSFFITKVENIMLKYGIEKEIIILRISGCPNGCGRSLLAEIGLIGKSLGRYNLYIGGNRIGSRIPKIYKENITEQEILIHLDFLIKIWSIERQKKEHFGDFVIRRNVVKKVVNPIYDFWN</sequence>
<feature type="chain" id="PRO_0000199894" description="Putative sulfite reductase [NADPH] hemoprotein beta-component">
    <location>
        <begin position="1"/>
        <end position="566"/>
    </location>
</feature>
<feature type="binding site" evidence="1">
    <location>
        <position position="430"/>
    </location>
    <ligand>
        <name>[4Fe-4S] cluster</name>
        <dbReference type="ChEBI" id="CHEBI:49883"/>
    </ligand>
</feature>
<feature type="binding site" evidence="1">
    <location>
        <position position="436"/>
    </location>
    <ligand>
        <name>[4Fe-4S] cluster</name>
        <dbReference type="ChEBI" id="CHEBI:49883"/>
    </ligand>
</feature>
<feature type="binding site" evidence="1">
    <location>
        <position position="475"/>
    </location>
    <ligand>
        <name>[4Fe-4S] cluster</name>
        <dbReference type="ChEBI" id="CHEBI:49883"/>
    </ligand>
</feature>
<feature type="binding site" evidence="1">
    <location>
        <position position="479"/>
    </location>
    <ligand>
        <name>[4Fe-4S] cluster</name>
        <dbReference type="ChEBI" id="CHEBI:49883"/>
    </ligand>
</feature>
<feature type="binding site" description="axial binding residue" evidence="1">
    <location>
        <position position="479"/>
    </location>
    <ligand>
        <name>siroheme</name>
        <dbReference type="ChEBI" id="CHEBI:60052"/>
    </ligand>
    <ligandPart>
        <name>Fe</name>
        <dbReference type="ChEBI" id="CHEBI:18248"/>
    </ligandPart>
</feature>
<organism>
    <name type="scientific">Buchnera aphidicola subsp. Schizaphis graminum (strain Sg)</name>
    <dbReference type="NCBI Taxonomy" id="198804"/>
    <lineage>
        <taxon>Bacteria</taxon>
        <taxon>Pseudomonadati</taxon>
        <taxon>Pseudomonadota</taxon>
        <taxon>Gammaproteobacteria</taxon>
        <taxon>Enterobacterales</taxon>
        <taxon>Erwiniaceae</taxon>
        <taxon>Buchnera</taxon>
    </lineage>
</organism>
<evidence type="ECO:0000255" key="1">
    <source>
        <dbReference type="HAMAP-Rule" id="MF_01540"/>
    </source>
</evidence>
<evidence type="ECO:0000305" key="2"/>
<comment type="function">
    <text evidence="1">Component of the sulfite reductase complex that catalyzes the 6-electron reduction of sulfite to sulfide. This is one of several activities required for the biosynthesis of L-cysteine from sulfate.</text>
</comment>
<comment type="catalytic activity">
    <reaction evidence="1">
        <text>hydrogen sulfide + 3 NADP(+) + 3 H2O = sulfite + 3 NADPH + 4 H(+)</text>
        <dbReference type="Rhea" id="RHEA:13801"/>
        <dbReference type="ChEBI" id="CHEBI:15377"/>
        <dbReference type="ChEBI" id="CHEBI:15378"/>
        <dbReference type="ChEBI" id="CHEBI:17359"/>
        <dbReference type="ChEBI" id="CHEBI:29919"/>
        <dbReference type="ChEBI" id="CHEBI:57783"/>
        <dbReference type="ChEBI" id="CHEBI:58349"/>
        <dbReference type="EC" id="1.8.1.2"/>
    </reaction>
</comment>
<comment type="cofactor">
    <cofactor evidence="1">
        <name>siroheme</name>
        <dbReference type="ChEBI" id="CHEBI:60052"/>
    </cofactor>
    <text evidence="1">Binds 1 siroheme per subunit.</text>
</comment>
<comment type="cofactor">
    <cofactor evidence="1">
        <name>[4Fe-4S] cluster</name>
        <dbReference type="ChEBI" id="CHEBI:49883"/>
    </cofactor>
    <text evidence="1">Binds 1 [4Fe-4S] cluster per subunit.</text>
</comment>
<comment type="pathway">
    <text evidence="1">Sulfur metabolism; hydrogen sulfide biosynthesis; hydrogen sulfide from sulfite (NADPH route): step 1/1.</text>
</comment>
<comment type="subunit">
    <text evidence="1">Alpha(8)-beta(8). The alpha component is a flavoprotein, the beta component is a hemoprotein.</text>
</comment>
<comment type="similarity">
    <text evidence="1">Belongs to the nitrite and sulfite reductase 4Fe-4S domain family.</text>
</comment>
<comment type="caution">
    <text evidence="2">Could be the product of a pseudogene.</text>
</comment>
<comment type="sequence caution" evidence="2">
    <conflict type="frameshift">
        <sequence resource="EMBL" id="AE013218"/>
    </conflict>
</comment>
<dbReference type="EC" id="1.8.1.2" evidence="1"/>
<dbReference type="EMBL" id="AE013218">
    <property type="status" value="NOT_ANNOTATED_CDS"/>
    <property type="molecule type" value="Genomic_DNA"/>
</dbReference>
<dbReference type="SMR" id="P0C0B2"/>
<dbReference type="UniPathway" id="UPA00140">
    <property type="reaction ID" value="UER00207"/>
</dbReference>
<dbReference type="Proteomes" id="UP000000416">
    <property type="component" value="Chromosome"/>
</dbReference>
<dbReference type="GO" id="GO:0009337">
    <property type="term" value="C:sulfite reductase complex (NADPH)"/>
    <property type="evidence" value="ECO:0007669"/>
    <property type="project" value="InterPro"/>
</dbReference>
<dbReference type="GO" id="GO:0051539">
    <property type="term" value="F:4 iron, 4 sulfur cluster binding"/>
    <property type="evidence" value="ECO:0007669"/>
    <property type="project" value="UniProtKB-KW"/>
</dbReference>
<dbReference type="GO" id="GO:0020037">
    <property type="term" value="F:heme binding"/>
    <property type="evidence" value="ECO:0007669"/>
    <property type="project" value="InterPro"/>
</dbReference>
<dbReference type="GO" id="GO:0046872">
    <property type="term" value="F:metal ion binding"/>
    <property type="evidence" value="ECO:0007669"/>
    <property type="project" value="UniProtKB-KW"/>
</dbReference>
<dbReference type="GO" id="GO:0050661">
    <property type="term" value="F:NADP binding"/>
    <property type="evidence" value="ECO:0007669"/>
    <property type="project" value="InterPro"/>
</dbReference>
<dbReference type="GO" id="GO:0050311">
    <property type="term" value="F:sulfite reductase (ferredoxin) activity"/>
    <property type="evidence" value="ECO:0007669"/>
    <property type="project" value="TreeGrafter"/>
</dbReference>
<dbReference type="GO" id="GO:0004783">
    <property type="term" value="F:sulfite reductase (NADPH) activity"/>
    <property type="evidence" value="ECO:0007669"/>
    <property type="project" value="UniProtKB-UniRule"/>
</dbReference>
<dbReference type="GO" id="GO:0019344">
    <property type="term" value="P:cysteine biosynthetic process"/>
    <property type="evidence" value="ECO:0007669"/>
    <property type="project" value="UniProtKB-KW"/>
</dbReference>
<dbReference type="GO" id="GO:0070814">
    <property type="term" value="P:hydrogen sulfide biosynthetic process"/>
    <property type="evidence" value="ECO:0007669"/>
    <property type="project" value="UniProtKB-UniRule"/>
</dbReference>
<dbReference type="GO" id="GO:0000103">
    <property type="term" value="P:sulfate assimilation"/>
    <property type="evidence" value="ECO:0007669"/>
    <property type="project" value="UniProtKB-UniRule"/>
</dbReference>
<dbReference type="FunFam" id="3.30.413.10:FF:000003">
    <property type="entry name" value="Sulfite reductase [NADPH] hemoprotein beta-component"/>
    <property type="match status" value="1"/>
</dbReference>
<dbReference type="FunFam" id="3.30.413.10:FF:000004">
    <property type="entry name" value="Sulfite reductase [NADPH] hemoprotein beta-component"/>
    <property type="match status" value="1"/>
</dbReference>
<dbReference type="Gene3D" id="3.30.413.10">
    <property type="entry name" value="Sulfite Reductase Hemoprotein, domain 1"/>
    <property type="match status" value="2"/>
</dbReference>
<dbReference type="HAMAP" id="MF_01540">
    <property type="entry name" value="CysI"/>
    <property type="match status" value="1"/>
</dbReference>
<dbReference type="InterPro" id="IPR011786">
    <property type="entry name" value="CysI"/>
</dbReference>
<dbReference type="InterPro" id="IPR005117">
    <property type="entry name" value="NiRdtase/SiRdtase_haem-b_fer"/>
</dbReference>
<dbReference type="InterPro" id="IPR036136">
    <property type="entry name" value="Nit/Sulf_reduc_fer-like_dom_sf"/>
</dbReference>
<dbReference type="InterPro" id="IPR006067">
    <property type="entry name" value="NO2/SO3_Rdtase_4Fe4S_dom"/>
</dbReference>
<dbReference type="InterPro" id="IPR045169">
    <property type="entry name" value="NO2/SO3_Rdtase_4Fe4S_prot"/>
</dbReference>
<dbReference type="InterPro" id="IPR045854">
    <property type="entry name" value="NO2/SO3_Rdtase_4Fe4S_sf"/>
</dbReference>
<dbReference type="InterPro" id="IPR006066">
    <property type="entry name" value="NO2/SO3_Rdtase_FeS/sirohaem_BS"/>
</dbReference>
<dbReference type="NCBIfam" id="TIGR02041">
    <property type="entry name" value="CysI"/>
    <property type="match status" value="1"/>
</dbReference>
<dbReference type="NCBIfam" id="NF010029">
    <property type="entry name" value="PRK13504.1"/>
    <property type="match status" value="1"/>
</dbReference>
<dbReference type="PANTHER" id="PTHR11493:SF47">
    <property type="entry name" value="SULFITE REDUCTASE [NADPH] SUBUNIT BETA"/>
    <property type="match status" value="1"/>
</dbReference>
<dbReference type="PANTHER" id="PTHR11493">
    <property type="entry name" value="SULFITE REDUCTASE [NADPH] SUBUNIT BETA-RELATED"/>
    <property type="match status" value="1"/>
</dbReference>
<dbReference type="Pfam" id="PF01077">
    <property type="entry name" value="NIR_SIR"/>
    <property type="match status" value="1"/>
</dbReference>
<dbReference type="Pfam" id="PF03460">
    <property type="entry name" value="NIR_SIR_ferr"/>
    <property type="match status" value="2"/>
</dbReference>
<dbReference type="PRINTS" id="PR00397">
    <property type="entry name" value="SIROHAEM"/>
</dbReference>
<dbReference type="SUPFAM" id="SSF56014">
    <property type="entry name" value="Nitrite and sulphite reductase 4Fe-4S domain-like"/>
    <property type="match status" value="2"/>
</dbReference>
<dbReference type="SUPFAM" id="SSF55124">
    <property type="entry name" value="Nitrite/Sulfite reductase N-terminal domain-like"/>
    <property type="match status" value="2"/>
</dbReference>
<dbReference type="PROSITE" id="PS00365">
    <property type="entry name" value="NIR_SIR"/>
    <property type="match status" value="1"/>
</dbReference>
<keyword id="KW-0004">4Fe-4S</keyword>
<keyword id="KW-0028">Amino-acid biosynthesis</keyword>
<keyword id="KW-0198">Cysteine biosynthesis</keyword>
<keyword id="KW-0349">Heme</keyword>
<keyword id="KW-0408">Iron</keyword>
<keyword id="KW-0411">Iron-sulfur</keyword>
<keyword id="KW-0479">Metal-binding</keyword>
<keyword id="KW-0521">NADP</keyword>
<keyword id="KW-0560">Oxidoreductase</keyword>
<protein>
    <recommendedName>
        <fullName>Putative sulfite reductase [NADPH] hemoprotein beta-component</fullName>
        <shortName evidence="1">SiR-HP</shortName>
        <shortName evidence="1">SiRHP</shortName>
        <ecNumber evidence="1">1.8.1.2</ecNumber>
    </recommendedName>
</protein>
<gene>
    <name evidence="1" type="primary">cysI</name>
    <name type="ordered locus">BUsg_412</name>
</gene>
<reference key="1">
    <citation type="journal article" date="2002" name="Science">
        <title>50 million years of genomic stasis in endosymbiotic bacteria.</title>
        <authorList>
            <person name="Tamas I."/>
            <person name="Klasson L."/>
            <person name="Canbaeck B."/>
            <person name="Naeslund A.K."/>
            <person name="Eriksson A.-S."/>
            <person name="Wernegreen J.J."/>
            <person name="Sandstroem J.P."/>
            <person name="Moran N.A."/>
            <person name="Andersson S.G.E."/>
        </authorList>
    </citation>
    <scope>NUCLEOTIDE SEQUENCE [LARGE SCALE GENOMIC DNA]</scope>
    <source>
        <strain>Sg</strain>
    </source>
</reference>
<name>CYSI_BUCAP</name>
<proteinExistence type="uncertain"/>